<dbReference type="EC" id="1.3.1.34" evidence="3 4 5"/>
<dbReference type="EMBL" id="U93405">
    <property type="protein sequence ID" value="AAB82738.1"/>
    <property type="molecule type" value="Genomic_DNA"/>
</dbReference>
<dbReference type="EMBL" id="U18997">
    <property type="protein sequence ID" value="AAA57882.1"/>
    <property type="molecule type" value="Genomic_DNA"/>
</dbReference>
<dbReference type="EMBL" id="U00096">
    <property type="protein sequence ID" value="AAC76116.1"/>
    <property type="molecule type" value="Genomic_DNA"/>
</dbReference>
<dbReference type="EMBL" id="AP009048">
    <property type="protein sequence ID" value="BAE77131.1"/>
    <property type="molecule type" value="Genomic_DNA"/>
</dbReference>
<dbReference type="PIR" id="F65096">
    <property type="entry name" value="F65096"/>
</dbReference>
<dbReference type="RefSeq" id="NP_417552.1">
    <property type="nucleotide sequence ID" value="NC_000913.3"/>
</dbReference>
<dbReference type="RefSeq" id="WP_000121433.1">
    <property type="nucleotide sequence ID" value="NZ_LN832404.1"/>
</dbReference>
<dbReference type="PDB" id="1PS9">
    <property type="method" value="X-ray"/>
    <property type="resolution" value="2.20 A"/>
    <property type="chains" value="A=2-672"/>
</dbReference>
<dbReference type="PDBsum" id="1PS9"/>
<dbReference type="SMR" id="P42593"/>
<dbReference type="BioGRID" id="4261984">
    <property type="interactions" value="24"/>
</dbReference>
<dbReference type="BioGRID" id="851910">
    <property type="interactions" value="4"/>
</dbReference>
<dbReference type="DIP" id="DIP-9562N"/>
<dbReference type="FunCoup" id="P42593">
    <property type="interactions" value="125"/>
</dbReference>
<dbReference type="IntAct" id="P42593">
    <property type="interactions" value="10"/>
</dbReference>
<dbReference type="STRING" id="511145.b3081"/>
<dbReference type="DrugBank" id="DB03698">
    <property type="generic name" value="5-Mercaptoethanol-2-decenoyl-coenzyme A"/>
</dbReference>
<dbReference type="DrugBank" id="DB03147">
    <property type="generic name" value="Flavin adenine dinucleotide"/>
</dbReference>
<dbReference type="DrugBank" id="DB03247">
    <property type="generic name" value="Flavin mononucleotide"/>
</dbReference>
<dbReference type="DrugBank" id="DB03461">
    <property type="generic name" value="Nicotinamide adenine dinucleotide phosphate"/>
</dbReference>
<dbReference type="SwissLipids" id="SLP:000001817"/>
<dbReference type="jPOST" id="P42593"/>
<dbReference type="PaxDb" id="511145-b3081"/>
<dbReference type="EnsemblBacteria" id="AAC76116">
    <property type="protein sequence ID" value="AAC76116"/>
    <property type="gene ID" value="b3081"/>
</dbReference>
<dbReference type="GeneID" id="947594"/>
<dbReference type="KEGG" id="ecj:JW3052"/>
<dbReference type="KEGG" id="eco:b3081"/>
<dbReference type="KEGG" id="ecoc:C3026_16825"/>
<dbReference type="PATRIC" id="fig|511145.12.peg.3176"/>
<dbReference type="EchoBASE" id="EB2582"/>
<dbReference type="eggNOG" id="COG0446">
    <property type="taxonomic scope" value="Bacteria"/>
</dbReference>
<dbReference type="eggNOG" id="COG1902">
    <property type="taxonomic scope" value="Bacteria"/>
</dbReference>
<dbReference type="HOGENOM" id="CLU_012153_1_1_6"/>
<dbReference type="InParanoid" id="P42593"/>
<dbReference type="OMA" id="WGGDYAR"/>
<dbReference type="OrthoDB" id="8523426at2"/>
<dbReference type="PhylomeDB" id="P42593"/>
<dbReference type="BioCyc" id="EcoCyc:DIENOYLCOAREDUCT-MONOMER"/>
<dbReference type="BioCyc" id="MetaCyc:DIENOYLCOAREDUCT-MONOMER"/>
<dbReference type="BRENDA" id="1.3.1.34">
    <property type="organism ID" value="2026"/>
</dbReference>
<dbReference type="UniPathway" id="UPA00659"/>
<dbReference type="EvolutionaryTrace" id="P42593"/>
<dbReference type="PRO" id="PR:P42593"/>
<dbReference type="Proteomes" id="UP000000625">
    <property type="component" value="Chromosome"/>
</dbReference>
<dbReference type="GO" id="GO:0008670">
    <property type="term" value="F:2,4-dienoyl-CoA reductase (NADPH) activity"/>
    <property type="evidence" value="ECO:0000314"/>
    <property type="project" value="EcoCyc"/>
</dbReference>
<dbReference type="GO" id="GO:0051539">
    <property type="term" value="F:4 iron, 4 sulfur cluster binding"/>
    <property type="evidence" value="ECO:0000314"/>
    <property type="project" value="EcoCyc"/>
</dbReference>
<dbReference type="GO" id="GO:0071949">
    <property type="term" value="F:FAD binding"/>
    <property type="evidence" value="ECO:0000314"/>
    <property type="project" value="EcoCyc"/>
</dbReference>
<dbReference type="GO" id="GO:0010181">
    <property type="term" value="F:FMN binding"/>
    <property type="evidence" value="ECO:0000314"/>
    <property type="project" value="EcoCyc"/>
</dbReference>
<dbReference type="GO" id="GO:0046872">
    <property type="term" value="F:metal ion binding"/>
    <property type="evidence" value="ECO:0007669"/>
    <property type="project" value="UniProtKB-KW"/>
</dbReference>
<dbReference type="GO" id="GO:0033543">
    <property type="term" value="P:fatty acid beta-oxidation, unsaturated, even number, reductase/isomerase pathway"/>
    <property type="evidence" value="ECO:0000315"/>
    <property type="project" value="EcoCyc"/>
</dbReference>
<dbReference type="CDD" id="cd02930">
    <property type="entry name" value="DCR_FMN"/>
    <property type="match status" value="1"/>
</dbReference>
<dbReference type="FunFam" id="3.20.20.70:FF:000082">
    <property type="entry name" value="NADPH-dependent 2,4-dienoyl-CoA reductase"/>
    <property type="match status" value="1"/>
</dbReference>
<dbReference type="FunFam" id="3.50.50.60:FF:000113">
    <property type="entry name" value="NADPH-dependent 2,4-dienoyl-CoA reductase"/>
    <property type="match status" value="1"/>
</dbReference>
<dbReference type="Gene3D" id="3.20.20.70">
    <property type="entry name" value="Aldolase class I"/>
    <property type="match status" value="1"/>
</dbReference>
<dbReference type="Gene3D" id="3.50.50.60">
    <property type="entry name" value="FAD/NAD(P)-binding domain"/>
    <property type="match status" value="1"/>
</dbReference>
<dbReference type="Gene3D" id="3.40.50.720">
    <property type="entry name" value="NAD(P)-binding Rossmann-like Domain"/>
    <property type="match status" value="1"/>
</dbReference>
<dbReference type="InterPro" id="IPR013785">
    <property type="entry name" value="Aldolase_TIM"/>
</dbReference>
<dbReference type="InterPro" id="IPR036188">
    <property type="entry name" value="FAD/NAD-bd_sf"/>
</dbReference>
<dbReference type="InterPro" id="IPR023753">
    <property type="entry name" value="FAD/NAD-binding_dom"/>
</dbReference>
<dbReference type="InterPro" id="IPR051793">
    <property type="entry name" value="NADH:flavin_oxidoreductase"/>
</dbReference>
<dbReference type="InterPro" id="IPR001155">
    <property type="entry name" value="OxRdtase_FMN_N"/>
</dbReference>
<dbReference type="PANTHER" id="PTHR42917">
    <property type="entry name" value="2,4-DIENOYL-COA REDUCTASE"/>
    <property type="match status" value="1"/>
</dbReference>
<dbReference type="PANTHER" id="PTHR42917:SF2">
    <property type="entry name" value="2,4-DIENOYL-COA REDUCTASE [(2E)-ENOYL-COA-PRODUCING]"/>
    <property type="match status" value="1"/>
</dbReference>
<dbReference type="Pfam" id="PF00724">
    <property type="entry name" value="Oxidored_FMN"/>
    <property type="match status" value="1"/>
</dbReference>
<dbReference type="Pfam" id="PF07992">
    <property type="entry name" value="Pyr_redox_2"/>
    <property type="match status" value="1"/>
</dbReference>
<dbReference type="PRINTS" id="PR00368">
    <property type="entry name" value="FADPNR"/>
</dbReference>
<dbReference type="PRINTS" id="PR00411">
    <property type="entry name" value="PNDRDTASEI"/>
</dbReference>
<dbReference type="SUPFAM" id="SSF51905">
    <property type="entry name" value="FAD/NAD(P)-binding domain"/>
    <property type="match status" value="1"/>
</dbReference>
<dbReference type="SUPFAM" id="SSF51395">
    <property type="entry name" value="FMN-linked oxidoreductases"/>
    <property type="match status" value="1"/>
</dbReference>
<dbReference type="SUPFAM" id="SSF51971">
    <property type="entry name" value="Nucleotide-binding domain"/>
    <property type="match status" value="1"/>
</dbReference>
<name>FADH_ECOLI</name>
<proteinExistence type="evidence at protein level"/>
<protein>
    <recommendedName>
        <fullName evidence="6 8">2,4-dienoyl-CoA reductase [(2E)-enoyl-CoA-producing]</fullName>
        <shortName evidence="7">DCR</shortName>
        <ecNumber evidence="3 4 5">1.3.1.34</ecNumber>
    </recommendedName>
    <alternativeName>
        <fullName evidence="13">2,4-dienoyl-coenzyme A reductase [NADPH]</fullName>
    </alternativeName>
</protein>
<evidence type="ECO:0000269" key="1">
    <source>
    </source>
</evidence>
<evidence type="ECO:0000269" key="2">
    <source>
    </source>
</evidence>
<evidence type="ECO:0000269" key="3">
    <source>
    </source>
</evidence>
<evidence type="ECO:0000269" key="4">
    <source>
    </source>
</evidence>
<evidence type="ECO:0000269" key="5">
    <source>
    </source>
</evidence>
<evidence type="ECO:0000303" key="6">
    <source>
    </source>
</evidence>
<evidence type="ECO:0000303" key="7">
    <source>
    </source>
</evidence>
<evidence type="ECO:0000303" key="8">
    <source>
    </source>
</evidence>
<evidence type="ECO:0000305" key="9"/>
<evidence type="ECO:0000305" key="10">
    <source>
    </source>
</evidence>
<evidence type="ECO:0000305" key="11">
    <source>
    </source>
</evidence>
<evidence type="ECO:0000305" key="12">
    <source>
    </source>
</evidence>
<evidence type="ECO:0000305" key="13">
    <source>
    </source>
</evidence>
<evidence type="ECO:0007744" key="14">
    <source>
        <dbReference type="PDB" id="1PS9"/>
    </source>
</evidence>
<evidence type="ECO:0007829" key="15">
    <source>
        <dbReference type="PDB" id="1PS9"/>
    </source>
</evidence>
<accession>P42593</accession>
<accession>Q2M9C5</accession>
<feature type="initiator methionine" description="Removed" evidence="5">
    <location>
        <position position="1"/>
    </location>
</feature>
<feature type="chain" id="PRO_0000194482" description="2,4-dienoyl-CoA reductase [(2E)-enoyl-CoA-producing]">
    <location>
        <begin position="2"/>
        <end position="672"/>
    </location>
</feature>
<feature type="active site" description="Proton donor" evidence="11 12">
    <location>
        <position position="167"/>
    </location>
</feature>
<feature type="binding site" evidence="2 14">
    <location>
        <begin position="25"/>
        <end position="27"/>
    </location>
    <ligand>
        <name>FMN</name>
        <dbReference type="ChEBI" id="CHEBI:58210"/>
    </ligand>
</feature>
<feature type="binding site" evidence="2 14">
    <location>
        <position position="59"/>
    </location>
    <ligand>
        <name>FMN</name>
        <dbReference type="ChEBI" id="CHEBI:58210"/>
    </ligand>
</feature>
<feature type="binding site" evidence="2 14">
    <location>
        <position position="101"/>
    </location>
    <ligand>
        <name>FMN</name>
        <dbReference type="ChEBI" id="CHEBI:58210"/>
    </ligand>
</feature>
<feature type="binding site" evidence="11 14">
    <location>
        <position position="176"/>
    </location>
    <ligand>
        <name>substrate</name>
    </ligand>
</feature>
<feature type="binding site" evidence="2 14">
    <location>
        <position position="215"/>
    </location>
    <ligand>
        <name>FMN</name>
        <dbReference type="ChEBI" id="CHEBI:58210"/>
    </ligand>
</feature>
<feature type="binding site" evidence="11 14">
    <location>
        <begin position="253"/>
        <end position="256"/>
    </location>
    <ligand>
        <name>substrate</name>
    </ligand>
</feature>
<feature type="binding site" evidence="2 14">
    <location>
        <position position="289"/>
    </location>
    <ligand>
        <name>FMN</name>
        <dbReference type="ChEBI" id="CHEBI:58210"/>
    </ligand>
</feature>
<feature type="binding site" evidence="2 14">
    <location>
        <begin position="311"/>
        <end position="312"/>
    </location>
    <ligand>
        <name>FMN</name>
        <dbReference type="ChEBI" id="CHEBI:58210"/>
    </ligand>
</feature>
<feature type="binding site" evidence="2 14">
    <location>
        <position position="335"/>
    </location>
    <ligand>
        <name>[4Fe-4S] cluster</name>
        <dbReference type="ChEBI" id="CHEBI:49883"/>
    </ligand>
</feature>
<feature type="binding site" evidence="2 14">
    <location>
        <position position="338"/>
    </location>
    <ligand>
        <name>[4Fe-4S] cluster</name>
        <dbReference type="ChEBI" id="CHEBI:49883"/>
    </ligand>
</feature>
<feature type="binding site" evidence="2 14">
    <location>
        <position position="340"/>
    </location>
    <ligand>
        <name>FAD</name>
        <dbReference type="ChEBI" id="CHEBI:57692"/>
    </ligand>
</feature>
<feature type="binding site" evidence="2 14">
    <location>
        <position position="340"/>
    </location>
    <ligand>
        <name>NADP(+)</name>
        <dbReference type="ChEBI" id="CHEBI:58349"/>
    </ligand>
</feature>
<feature type="binding site" evidence="2 14">
    <location>
        <position position="342"/>
    </location>
    <ligand>
        <name>[4Fe-4S] cluster</name>
        <dbReference type="ChEBI" id="CHEBI:49883"/>
    </ligand>
</feature>
<feature type="binding site" evidence="2 14">
    <location>
        <position position="354"/>
    </location>
    <ligand>
        <name>[4Fe-4S] cluster</name>
        <dbReference type="ChEBI" id="CHEBI:49883"/>
    </ligand>
</feature>
<feature type="binding site" evidence="2 14">
    <location>
        <position position="385"/>
    </location>
    <ligand>
        <name>FAD</name>
        <dbReference type="ChEBI" id="CHEBI:57692"/>
    </ligand>
</feature>
<feature type="binding site" evidence="2 14">
    <location>
        <position position="404"/>
    </location>
    <ligand>
        <name>FAD</name>
        <dbReference type="ChEBI" id="CHEBI:57692"/>
    </ligand>
</feature>
<feature type="binding site" evidence="2 14">
    <location>
        <position position="412"/>
    </location>
    <ligand>
        <name>FAD</name>
        <dbReference type="ChEBI" id="CHEBI:57692"/>
    </ligand>
</feature>
<feature type="binding site" evidence="2 14">
    <location>
        <position position="422"/>
    </location>
    <ligand>
        <name>FAD</name>
        <dbReference type="ChEBI" id="CHEBI:57692"/>
    </ligand>
</feature>
<feature type="binding site" evidence="2 14">
    <location>
        <position position="449"/>
    </location>
    <ligand>
        <name>FAD</name>
        <dbReference type="ChEBI" id="CHEBI:57692"/>
    </ligand>
</feature>
<feature type="binding site" evidence="2 14">
    <location>
        <begin position="563"/>
        <end position="564"/>
    </location>
    <ligand>
        <name>NADP(+)</name>
        <dbReference type="ChEBI" id="CHEBI:58349"/>
    </ligand>
</feature>
<feature type="binding site" evidence="11 14">
    <location>
        <position position="567"/>
    </location>
    <ligand>
        <name>substrate</name>
    </ligand>
</feature>
<feature type="binding site" evidence="11 14">
    <location>
        <position position="578"/>
    </location>
    <ligand>
        <name>substrate</name>
    </ligand>
</feature>
<feature type="binding site" evidence="2 14">
    <location>
        <position position="649"/>
    </location>
    <ligand>
        <name>FAD</name>
        <dbReference type="ChEBI" id="CHEBI:57692"/>
    </ligand>
</feature>
<feature type="binding site" evidence="2 14">
    <location>
        <begin position="654"/>
        <end position="656"/>
    </location>
    <ligand>
        <name>NADP(+)</name>
        <dbReference type="ChEBI" id="CHEBI:58349"/>
    </ligand>
</feature>
<feature type="binding site" evidence="2 14">
    <location>
        <begin position="656"/>
        <end position="658"/>
    </location>
    <ligand>
        <name>FAD</name>
        <dbReference type="ChEBI" id="CHEBI:57692"/>
    </ligand>
</feature>
<feature type="site" description="Important for catalytic activity, assists active site Tyr in protonation of C4" evidence="11 12">
    <location>
        <position position="253"/>
    </location>
</feature>
<feature type="mutagenesis site" description="Exhibits 1.3% of wild-type activity." evidence="3">
    <original>E</original>
    <variation>A</variation>
    <location>
        <position position="165"/>
    </location>
</feature>
<feature type="mutagenesis site" description="Loss of enzyme activity; when associated with Ala-167." evidence="3">
    <original>E</original>
    <variation>Q</variation>
    <location>
        <position position="165"/>
    </location>
</feature>
<feature type="mutagenesis site" description="Forms 3-enoyl-CoA as the product of the reaction instead of 2-enoyl-CoA, at a rate which is 26% of wild-type. 2-fold increase in substrate affinity. Loss of enzyme activity; when associated with Gln-165." evidence="3">
    <original>Y</original>
    <variation>F</variation>
    <location>
        <position position="167"/>
    </location>
</feature>
<feature type="mutagenesis site" description="1000-fold reduction in enzyme activity. Forms both 3-enoyl-CoA and 2-enoyl-CoA as products of the reaction." evidence="3">
    <original>H</original>
    <variation>A</variation>
    <location>
        <position position="253"/>
    </location>
</feature>
<feature type="mutagenesis site" description="Loss of enzyme activity." evidence="3">
    <original>H</original>
    <variation>F</variation>
    <location>
        <position position="253"/>
    </location>
</feature>
<feature type="mutagenesis site" description="1000-fold reduction in enzyme activity. Highly affects iron-sulfur cluster binding." evidence="3">
    <original>C</original>
    <variation>A</variation>
    <location>
        <position position="338"/>
    </location>
</feature>
<feature type="turn" evidence="15">
    <location>
        <begin position="4"/>
        <end position="7"/>
    </location>
</feature>
<feature type="strand" evidence="15">
    <location>
        <begin position="16"/>
        <end position="23"/>
    </location>
</feature>
<feature type="helix" evidence="15">
    <location>
        <begin position="36"/>
        <end position="49"/>
    </location>
</feature>
<feature type="strand" evidence="15">
    <location>
        <begin position="53"/>
        <end position="64"/>
    </location>
</feature>
<feature type="helix" evidence="15">
    <location>
        <begin position="78"/>
        <end position="80"/>
    </location>
</feature>
<feature type="helix" evidence="15">
    <location>
        <begin position="81"/>
        <end position="93"/>
    </location>
</feature>
<feature type="strand" evidence="15">
    <location>
        <begin position="98"/>
        <end position="102"/>
    </location>
</feature>
<feature type="helix" evidence="15">
    <location>
        <begin position="106"/>
        <end position="108"/>
    </location>
</feature>
<feature type="strand" evidence="15">
    <location>
        <begin position="109"/>
        <end position="111"/>
    </location>
</feature>
<feature type="strand" evidence="15">
    <location>
        <begin position="115"/>
        <end position="119"/>
    </location>
</feature>
<feature type="helix" evidence="15">
    <location>
        <begin position="134"/>
        <end position="153"/>
    </location>
</feature>
<feature type="strand" evidence="15">
    <location>
        <begin position="157"/>
        <end position="163"/>
    </location>
</feature>
<feature type="helix" evidence="15">
    <location>
        <begin position="168"/>
        <end position="173"/>
    </location>
</feature>
<feature type="turn" evidence="15">
    <location>
        <begin position="175"/>
        <end position="177"/>
    </location>
</feature>
<feature type="strand" evidence="15">
    <location>
        <begin position="185"/>
        <end position="187"/>
    </location>
</feature>
<feature type="helix" evidence="15">
    <location>
        <begin position="188"/>
        <end position="206"/>
    </location>
</feature>
<feature type="strand" evidence="15">
    <location>
        <begin position="208"/>
        <end position="219"/>
    </location>
</feature>
<feature type="helix" evidence="15">
    <location>
        <begin position="228"/>
        <end position="241"/>
    </location>
</feature>
<feature type="strand" evidence="15">
    <location>
        <begin position="244"/>
        <end position="250"/>
    </location>
</feature>
<feature type="strand" evidence="15">
    <location>
        <begin position="259"/>
        <end position="261"/>
    </location>
</feature>
<feature type="turn" evidence="15">
    <location>
        <begin position="266"/>
        <end position="269"/>
    </location>
</feature>
<feature type="helix" evidence="15">
    <location>
        <begin position="270"/>
        <end position="276"/>
    </location>
</feature>
<feature type="strand" evidence="15">
    <location>
        <begin position="284"/>
        <end position="286"/>
    </location>
</feature>
<feature type="helix" evidence="15">
    <location>
        <begin position="293"/>
        <end position="301"/>
    </location>
</feature>
<feature type="strand" evidence="15">
    <location>
        <begin position="306"/>
        <end position="311"/>
    </location>
</feature>
<feature type="helix" evidence="15">
    <location>
        <begin position="313"/>
        <end position="316"/>
    </location>
</feature>
<feature type="helix" evidence="15">
    <location>
        <begin position="320"/>
        <end position="325"/>
    </location>
</feature>
<feature type="helix" evidence="15">
    <location>
        <begin position="329"/>
        <end position="331"/>
    </location>
</feature>
<feature type="turn" evidence="15">
    <location>
        <begin position="340"/>
        <end position="342"/>
    </location>
</feature>
<feature type="helix" evidence="15">
    <location>
        <begin position="343"/>
        <end position="347"/>
    </location>
</feature>
<feature type="turn" evidence="15">
    <location>
        <begin position="358"/>
        <end position="361"/>
    </location>
</feature>
<feature type="turn" evidence="15">
    <location>
        <begin position="363"/>
        <end position="365"/>
    </location>
</feature>
<feature type="strand" evidence="15">
    <location>
        <begin position="376"/>
        <end position="380"/>
    </location>
</feature>
<feature type="helix" evidence="15">
    <location>
        <begin position="384"/>
        <end position="394"/>
    </location>
</feature>
<feature type="turn" evidence="15">
    <location>
        <begin position="395"/>
        <end position="397"/>
    </location>
</feature>
<feature type="strand" evidence="15">
    <location>
        <begin position="399"/>
        <end position="409"/>
    </location>
</feature>
<feature type="helix" evidence="15">
    <location>
        <begin position="413"/>
        <end position="416"/>
    </location>
</feature>
<feature type="helix" evidence="15">
    <location>
        <begin position="425"/>
        <end position="439"/>
    </location>
</feature>
<feature type="strand" evidence="15">
    <location>
        <begin position="442"/>
        <end position="446"/>
    </location>
</feature>
<feature type="strand" evidence="15">
    <location>
        <begin position="451"/>
        <end position="454"/>
    </location>
</feature>
<feature type="strand" evidence="15">
    <location>
        <begin position="457"/>
        <end position="462"/>
    </location>
</feature>
<feature type="strand" evidence="15">
    <location>
        <begin position="466"/>
        <end position="468"/>
    </location>
</feature>
<feature type="turn" evidence="15">
    <location>
        <begin position="475"/>
        <end position="477"/>
    </location>
</feature>
<feature type="strand" evidence="15">
    <location>
        <begin position="481"/>
        <end position="483"/>
    </location>
</feature>
<feature type="helix" evidence="15">
    <location>
        <begin position="484"/>
        <end position="488"/>
    </location>
</feature>
<feature type="strand" evidence="15">
    <location>
        <begin position="496"/>
        <end position="501"/>
    </location>
</feature>
<feature type="helix" evidence="15">
    <location>
        <begin position="504"/>
        <end position="514"/>
    </location>
</feature>
<feature type="helix" evidence="15">
    <location>
        <begin position="521"/>
        <end position="523"/>
    </location>
</feature>
<feature type="helix" evidence="15">
    <location>
        <begin position="525"/>
        <end position="531"/>
    </location>
</feature>
<feature type="helix" evidence="15">
    <location>
        <begin position="541"/>
        <end position="543"/>
    </location>
</feature>
<feature type="strand" evidence="15">
    <location>
        <begin position="555"/>
        <end position="561"/>
    </location>
</feature>
<feature type="turn" evidence="15">
    <location>
        <begin position="568"/>
        <end position="571"/>
    </location>
</feature>
<feature type="turn" evidence="15">
    <location>
        <begin position="574"/>
        <end position="576"/>
    </location>
</feature>
<feature type="helix" evidence="15">
    <location>
        <begin position="577"/>
        <end position="586"/>
    </location>
</feature>
<feature type="strand" evidence="15">
    <location>
        <begin position="590"/>
        <end position="592"/>
    </location>
</feature>
<feature type="strand" evidence="15">
    <location>
        <begin position="596"/>
        <end position="601"/>
    </location>
</feature>
<feature type="strand" evidence="15">
    <location>
        <begin position="604"/>
        <end position="609"/>
    </location>
</feature>
<feature type="strand" evidence="15">
    <location>
        <begin position="612"/>
        <end position="616"/>
    </location>
</feature>
<feature type="strand" evidence="15">
    <location>
        <begin position="619"/>
        <end position="623"/>
    </location>
</feature>
<feature type="strand" evidence="15">
    <location>
        <begin position="627"/>
        <end position="629"/>
    </location>
</feature>
<feature type="helix" evidence="15">
    <location>
        <begin position="634"/>
        <end position="638"/>
    </location>
</feature>
<feature type="turn" evidence="15">
    <location>
        <begin position="639"/>
        <end position="641"/>
    </location>
</feature>
<feature type="strand" evidence="15">
    <location>
        <begin position="644"/>
        <end position="646"/>
    </location>
</feature>
<feature type="helix" evidence="15">
    <location>
        <begin position="648"/>
        <end position="650"/>
    </location>
</feature>
<feature type="helix" evidence="15">
    <location>
        <begin position="658"/>
        <end position="671"/>
    </location>
</feature>
<gene>
    <name evidence="8" type="primary">fadH</name>
    <name type="synonym">ygjL</name>
    <name type="ordered locus">b3081</name>
    <name type="ordered locus">JW3052</name>
</gene>
<keyword id="KW-0002">3D-structure</keyword>
<keyword id="KW-0004">4Fe-4S</keyword>
<keyword id="KW-0903">Direct protein sequencing</keyword>
<keyword id="KW-0274">FAD</keyword>
<keyword id="KW-0285">Flavoprotein</keyword>
<keyword id="KW-0288">FMN</keyword>
<keyword id="KW-0408">Iron</keyword>
<keyword id="KW-0411">Iron-sulfur</keyword>
<keyword id="KW-0479">Metal-binding</keyword>
<keyword id="KW-0521">NADP</keyword>
<keyword id="KW-0560">Oxidoreductase</keyword>
<keyword id="KW-1185">Reference proteome</keyword>
<sequence length="672" mass="72678">MSYPSLFAPLDLGFTTLKNRVLMGSMHTGLEEYPDGAERLAAFYAERARHGVALIVSGGIAPDLTGVGMEGGAMLNDASQIPHHRTITEAVHQEGGKIALQILHTGRYSYQPHLVAPSALQAPINRFVPHELSHEEILQLIDNFARCAQLAREAGYDGVEVMGSEGYLINEFLTLRTNQRSDQWGGDYRNRMRFAVEVVRAVRERVGNDFIIIYRLSMLDLVEDGGTFAETVELAQAIEAAGATIINTGIGWHEARIPTIATPVPRGAFSWVTRKLKGHVSLPLVTTNRINDPQVADDILSRGDADMVSMARPFLADAELLSKAQSGRADEINTCIGCNQACLDQIFVGKVTSCLVNPRACHETKMPILPAVQKKNLAVVGAGPAGLAFAINAAARGHQVTLFDAHSEIGGQFNIAKQIPGKEEFYETLRYYRRMIEVTGVTLKLNHTVTADQLQAFDETILASGIVPRTPPIDGIDHPKVLSYLDVLRDKAPVGNKVAIIGCGGIGFDTAMYLSQPGESTSQNIAGFCNEWGIDSSLQQAGGLSPQGMQIPRSPRQIVMLQRKASKPGQGLGKTTGWIHRTTLLSRGVKMIPGVSYQKIDDDGLHVVINGETQVLAVDNVVICAGQEPNRALAQPLIDSGKTVHLIGGCDVAMELDARRAIAQGTRLALEI</sequence>
<reference key="1">
    <citation type="journal article" date="1997" name="Eur. J. Biochem.">
        <title>Cloning and expression of the fadH gene and characterization of the gene product 2,4-dienoyl coenzyme A reductase from Escherichia coli.</title>
        <authorList>
            <person name="He X.-Y."/>
            <person name="Yang S.-Y."/>
            <person name="Schulz H."/>
        </authorList>
    </citation>
    <scope>NUCLEOTIDE SEQUENCE [GENOMIC DNA]</scope>
    <scope>PROTEIN SEQUENCE OF 2-31</scope>
    <scope>FUNCTION</scope>
    <scope>CATALYTIC ACTIVITY</scope>
    <scope>BIOPHYSICOCHEMICAL PROPERTIES</scope>
    <source>
        <strain>K12</strain>
    </source>
</reference>
<reference key="2">
    <citation type="journal article" date="1997" name="Science">
        <title>The complete genome sequence of Escherichia coli K-12.</title>
        <authorList>
            <person name="Blattner F.R."/>
            <person name="Plunkett G. III"/>
            <person name="Bloch C.A."/>
            <person name="Perna N.T."/>
            <person name="Burland V."/>
            <person name="Riley M."/>
            <person name="Collado-Vides J."/>
            <person name="Glasner J.D."/>
            <person name="Rode C.K."/>
            <person name="Mayhew G.F."/>
            <person name="Gregor J."/>
            <person name="Davis N.W."/>
            <person name="Kirkpatrick H.A."/>
            <person name="Goeden M.A."/>
            <person name="Rose D.J."/>
            <person name="Mau B."/>
            <person name="Shao Y."/>
        </authorList>
    </citation>
    <scope>NUCLEOTIDE SEQUENCE [LARGE SCALE GENOMIC DNA]</scope>
    <source>
        <strain>K12 / MG1655 / ATCC 47076</strain>
    </source>
</reference>
<reference key="3">
    <citation type="journal article" date="2006" name="Mol. Syst. Biol.">
        <title>Highly accurate genome sequences of Escherichia coli K-12 strains MG1655 and W3110.</title>
        <authorList>
            <person name="Hayashi K."/>
            <person name="Morooka N."/>
            <person name="Yamamoto Y."/>
            <person name="Fujita K."/>
            <person name="Isono K."/>
            <person name="Choi S."/>
            <person name="Ohtsubo E."/>
            <person name="Baba T."/>
            <person name="Wanner B.L."/>
            <person name="Mori H."/>
            <person name="Horiuchi T."/>
        </authorList>
    </citation>
    <scope>NUCLEOTIDE SEQUENCE [LARGE SCALE GENOMIC DNA]</scope>
    <source>
        <strain>K12 / W3110 / ATCC 27325 / DSM 5911</strain>
    </source>
</reference>
<reference key="4">
    <citation type="journal article" date="1984" name="J. Biol. Chem.">
        <title>2,4-Dienoyl coenzyme A reductases from bovine liver and Escherichia coli. Comparison of properties.</title>
        <authorList>
            <person name="Dommes V."/>
            <person name="Kunau W.H."/>
        </authorList>
    </citation>
    <scope>FUNCTION</scope>
    <scope>CATALYTIC ACTIVITY</scope>
    <scope>BIOPHYSICOCHEMICAL PROPERTIES</scope>
    <scope>COFACTOR</scope>
    <scope>ACTIVITY REGULATION</scope>
    <scope>SUBUNIT</scope>
    <scope>INDUCTION</scope>
    <scope>PATHWAY</scope>
</reference>
<reference key="5">
    <citation type="journal article" date="2000" name="Arch. Biochem. Biophys.">
        <title>2,4-Dienoyl-CoA reductase from Escherichia coli is a novel iron-sulfur flavoprotein that functions in fatty acid beta-oxidation.</title>
        <authorList>
            <person name="Liang X."/>
            <person name="Thorpe C."/>
            <person name="Schulz H."/>
        </authorList>
    </citation>
    <scope>FUNCTION</scope>
    <scope>COFACTOR</scope>
    <scope>PATHWAY</scope>
    <source>
        <strain>K12</strain>
    </source>
</reference>
<reference key="6">
    <citation type="journal article" date="2008" name="Biochemistry">
        <title>Two distinct proton donors at the active site of Escherichia coli 2,4-dienoyl-CoA reductase are responsible for the formation of different products.</title>
        <authorList>
            <person name="Tu X."/>
            <person name="Hubbard P.A."/>
            <person name="Kim J.J."/>
            <person name="Schulz H."/>
        </authorList>
    </citation>
    <scope>CATALYTIC ACTIVITY</scope>
    <scope>REACTION MECHANISM</scope>
    <scope>ACTIVE SITE</scope>
    <scope>MUTAGENESIS OF GLU-165; TYR-167; HIS-253 AND CYS-338</scope>
    <source>
        <strain>K12</strain>
    </source>
</reference>
<reference key="7">
    <citation type="journal article" date="2003" name="J. Biol. Chem.">
        <title>The crystal structure and reaction mechanism of Escherichia coli 2,4-dienoyl-CoA reductase.</title>
        <authorList>
            <person name="Hubbard P.A."/>
            <person name="Liang X."/>
            <person name="Schulz H."/>
            <person name="Kim J.J."/>
        </authorList>
    </citation>
    <scope>X-RAY CRYSTALLOGRAPHY (2.20 ANGSTROMS) OF 2-672 IN COMPLEX WITH 5-MERCAPTOETHANOL-2-DECENOYL-COENZYME A; FAD; FMN; IRON-SULFUR (4FE-4S) AND NADP</scope>
    <scope>COFACTOR</scope>
    <scope>DOMAIN</scope>
    <scope>REACTION MECHANISM</scope>
    <scope>ACTIVE SITE</scope>
    <source>
        <strain>K12</strain>
    </source>
</reference>
<comment type="function">
    <text evidence="1 4 5">Functions as an auxiliary enzyme in the beta-oxidation of unsaturated fatty acids with double bonds at even carbon positions. Catalyzes the NADPH-dependent reduction of the C4-C5 double bond of the acyl chain of 2,4-dienoyl-CoA to yield 2-trans-enoyl-CoA (PubMed:6363415, PubMed:9346310). Acts on both isomers, 2-trans,4-cis- and 2-trans,4-trans-decadienoyl-CoA, with almost equal efficiency (PubMed:6363415). Is not active with NADH instead of NADPH (PubMed:6363415). Does not show cis-&gt;trans isomerase activity (PubMed:10933894).</text>
</comment>
<comment type="catalytic activity">
    <reaction evidence="3 4 5">
        <text>a 4,5-saturated-(2E)-enoyl-CoA + NADP(+) = a (2E,4E)-dienoyl-CoA + NADPH + H(+)</text>
        <dbReference type="Rhea" id="RHEA:12136"/>
        <dbReference type="ChEBI" id="CHEBI:15378"/>
        <dbReference type="ChEBI" id="CHEBI:57783"/>
        <dbReference type="ChEBI" id="CHEBI:58349"/>
        <dbReference type="ChEBI" id="CHEBI:85100"/>
        <dbReference type="ChEBI" id="CHEBI:85101"/>
        <dbReference type="EC" id="1.3.1.34"/>
    </reaction>
</comment>
<comment type="catalytic activity">
    <reaction evidence="4">
        <text>a (2E,4Z)-dienoyl-CoA + NADPH + H(+) = a 4,5-saturated-(2E)-enoyl-CoA + NADP(+)</text>
        <dbReference type="Rhea" id="RHEA:45232"/>
        <dbReference type="ChEBI" id="CHEBI:15378"/>
        <dbReference type="ChEBI" id="CHEBI:57783"/>
        <dbReference type="ChEBI" id="CHEBI:58349"/>
        <dbReference type="ChEBI" id="CHEBI:85099"/>
        <dbReference type="ChEBI" id="CHEBI:85100"/>
        <dbReference type="EC" id="1.3.1.34"/>
    </reaction>
</comment>
<comment type="catalytic activity">
    <reaction evidence="3 4 5">
        <text>(2E)-decenoyl-CoA + NADP(+) = (2E,4E)-decadienoyl-CoA + NADPH + H(+)</text>
        <dbReference type="Rhea" id="RHEA:53296"/>
        <dbReference type="ChEBI" id="CHEBI:15378"/>
        <dbReference type="ChEBI" id="CHEBI:57783"/>
        <dbReference type="ChEBI" id="CHEBI:58349"/>
        <dbReference type="ChEBI" id="CHEBI:61406"/>
        <dbReference type="ChEBI" id="CHEBI:62244"/>
    </reaction>
</comment>
<comment type="catalytic activity">
    <reaction evidence="4">
        <text>(2E)-decenoyl-CoA + NADP(+) = (2E,4Z)-decadienoyl-CoA + NADPH + H(+)</text>
        <dbReference type="Rhea" id="RHEA:53708"/>
        <dbReference type="ChEBI" id="CHEBI:15378"/>
        <dbReference type="ChEBI" id="CHEBI:57783"/>
        <dbReference type="ChEBI" id="CHEBI:58349"/>
        <dbReference type="ChEBI" id="CHEBI:61406"/>
        <dbReference type="ChEBI" id="CHEBI:137593"/>
    </reaction>
</comment>
<comment type="cofactor">
    <cofactor evidence="1 2">
        <name>FMN</name>
        <dbReference type="ChEBI" id="CHEBI:58210"/>
    </cofactor>
</comment>
<comment type="cofactor">
    <cofactor evidence="1 2 4">
        <name>FAD</name>
        <dbReference type="ChEBI" id="CHEBI:57692"/>
    </cofactor>
</comment>
<comment type="cofactor">
    <cofactor evidence="1 2">
        <name>[4Fe-4S] cluster</name>
        <dbReference type="ChEBI" id="CHEBI:49883"/>
    </cofactor>
</comment>
<comment type="activity regulation">
    <text evidence="4">Is non-competitively inhibited by NADH.</text>
</comment>
<comment type="biophysicochemical properties">
    <kinetics>
        <KM evidence="5">50 uM for NADPH</KM>
        <KM evidence="4">10.1 uM for NADPH</KM>
        <KM evidence="5">2.3 uM for (2E,4E)-decadienoyl-CoA</KM>
        <KM evidence="4">8.8 uM for (2E,4E)-decadienoyl-CoA</KM>
        <KM evidence="4">4.1 uM for (2E,4Z)-decadienoyl-CoA</KM>
        <text evidence="5">kcat is 16 sec(-1) for the NADPH-reduction of (2E,4E)-decadienoyl-CoA.</text>
    </kinetics>
</comment>
<comment type="pathway">
    <text evidence="10 13">Lipid metabolism; fatty acid beta-oxidation.</text>
</comment>
<comment type="subunit">
    <text evidence="4">Monomer.</text>
</comment>
<comment type="interaction">
    <interactant intactId="EBI-561933">
        <id>P42593</id>
    </interactant>
    <interactant intactId="EBI-555067">
        <id>P11349</id>
        <label>narH</label>
    </interactant>
    <organismsDiffer>false</organismsDiffer>
    <experiments>3</experiments>
</comment>
<comment type="interaction">
    <interactant intactId="EBI-561933">
        <id>P42593</id>
    </interactant>
    <interactant intactId="EBI-555059">
        <id>P19318</id>
        <label>narY</label>
    </interactant>
    <organismsDiffer>false</organismsDiffer>
    <experiments>3</experiments>
</comment>
<comment type="induction">
    <text evidence="4">Induced when cells are grown on oleate as sole carbon source. Repressed by glucose.</text>
</comment>
<comment type="domain">
    <text evidence="2">Is composed of three domains: an N-terminal TIM barrel (residues 1-368) which binds FMN, the 4Fe-4S cluster, and the substrate; a flavodoxin-like fold (residues 369-467 and 626-671) which binds FAD; and an NADP(H)-binding domain (residues 468-625).</text>
</comment>
<comment type="miscellaneous">
    <text evidence="11">The overall reaction mechanism can be divided into three stages: initially, reduction of FAD by NADPH, then electron transfer from FAD to FMN via the 4Fe-4S cluster, and finally reduction of substrate.</text>
</comment>
<comment type="similarity">
    <text evidence="9">In the N-terminal section; belongs to the NADH:flavin oxidoreductase/NADH oxidase family.</text>
</comment>
<organism>
    <name type="scientific">Escherichia coli (strain K12)</name>
    <dbReference type="NCBI Taxonomy" id="83333"/>
    <lineage>
        <taxon>Bacteria</taxon>
        <taxon>Pseudomonadati</taxon>
        <taxon>Pseudomonadota</taxon>
        <taxon>Gammaproteobacteria</taxon>
        <taxon>Enterobacterales</taxon>
        <taxon>Enterobacteriaceae</taxon>
        <taxon>Escherichia</taxon>
    </lineage>
</organism>